<dbReference type="EMBL" id="BX640450">
    <property type="protein sequence ID" value="CAE34796.1"/>
    <property type="molecule type" value="Genomic_DNA"/>
</dbReference>
<dbReference type="SMR" id="P67691"/>
<dbReference type="KEGG" id="bbr:BB4433"/>
<dbReference type="eggNOG" id="COG4582">
    <property type="taxonomic scope" value="Bacteria"/>
</dbReference>
<dbReference type="HOGENOM" id="CLU_076303_0_1_4"/>
<dbReference type="Proteomes" id="UP000001027">
    <property type="component" value="Chromosome"/>
</dbReference>
<dbReference type="GO" id="GO:0032153">
    <property type="term" value="C:cell division site"/>
    <property type="evidence" value="ECO:0007669"/>
    <property type="project" value="TreeGrafter"/>
</dbReference>
<dbReference type="GO" id="GO:0005737">
    <property type="term" value="C:cytoplasm"/>
    <property type="evidence" value="ECO:0007669"/>
    <property type="project" value="UniProtKB-SubCell"/>
</dbReference>
<dbReference type="GO" id="GO:0000917">
    <property type="term" value="P:division septum assembly"/>
    <property type="evidence" value="ECO:0007669"/>
    <property type="project" value="UniProtKB-KW"/>
</dbReference>
<dbReference type="GO" id="GO:0043093">
    <property type="term" value="P:FtsZ-dependent cytokinesis"/>
    <property type="evidence" value="ECO:0007669"/>
    <property type="project" value="UniProtKB-UniRule"/>
</dbReference>
<dbReference type="Gene3D" id="1.10.3900.10">
    <property type="entry name" value="YacF-like"/>
    <property type="match status" value="1"/>
</dbReference>
<dbReference type="Gene3D" id="2.60.440.10">
    <property type="entry name" value="YacF-like domains"/>
    <property type="match status" value="1"/>
</dbReference>
<dbReference type="HAMAP" id="MF_01092">
    <property type="entry name" value="ZapD"/>
    <property type="match status" value="1"/>
</dbReference>
<dbReference type="InterPro" id="IPR009777">
    <property type="entry name" value="ZapD"/>
</dbReference>
<dbReference type="InterPro" id="IPR027462">
    <property type="entry name" value="ZapD_C"/>
</dbReference>
<dbReference type="InterPro" id="IPR036268">
    <property type="entry name" value="ZapD_sf"/>
</dbReference>
<dbReference type="NCBIfam" id="NF003656">
    <property type="entry name" value="PRK05287.1-4"/>
    <property type="match status" value="1"/>
</dbReference>
<dbReference type="PANTHER" id="PTHR39455">
    <property type="entry name" value="CELL DIVISION PROTEIN ZAPD"/>
    <property type="match status" value="1"/>
</dbReference>
<dbReference type="PANTHER" id="PTHR39455:SF1">
    <property type="entry name" value="CELL DIVISION PROTEIN ZAPD"/>
    <property type="match status" value="1"/>
</dbReference>
<dbReference type="Pfam" id="PF07072">
    <property type="entry name" value="ZapD"/>
    <property type="match status" value="1"/>
</dbReference>
<dbReference type="SUPFAM" id="SSF160950">
    <property type="entry name" value="YacF-like"/>
    <property type="match status" value="1"/>
</dbReference>
<feature type="chain" id="PRO_0000211661" description="Cell division protein ZapD">
    <location>
        <begin position="1"/>
        <end position="253"/>
    </location>
</feature>
<proteinExistence type="inferred from homology"/>
<gene>
    <name evidence="1" type="primary">zapD</name>
    <name type="ordered locus">BB4433</name>
</gene>
<evidence type="ECO:0000255" key="1">
    <source>
        <dbReference type="HAMAP-Rule" id="MF_01092"/>
    </source>
</evidence>
<sequence length="253" mass="28608">MASVILYEYPFNERIRAYLRLEYLFDRLFFFAREGDARLHQIAVSSLFDLLDASERTDIKGAVLQDLERQRMALVGLRDHPGVAQDALEAMLRDMERVVAALAAQGKTGQALRENEWLVSLRGRLAVPGGATQVDMPSYHAWQNKPESVRCADLQSWLAPLLPLHEGLSMALRLLRESGRRADIAAEQGGYQQMLAGKIYHLLRVWVDPSLGVFPEISANKYMVWIRFSTQDGEVKPQQVSRDVAFQMSLCSS</sequence>
<name>ZAPD_BORBR</name>
<protein>
    <recommendedName>
        <fullName evidence="1">Cell division protein ZapD</fullName>
    </recommendedName>
    <alternativeName>
        <fullName evidence="1">Z ring-associated protein D</fullName>
    </alternativeName>
</protein>
<keyword id="KW-0131">Cell cycle</keyword>
<keyword id="KW-0132">Cell division</keyword>
<keyword id="KW-0963">Cytoplasm</keyword>
<keyword id="KW-0717">Septation</keyword>
<comment type="function">
    <text evidence="1">Cell division factor that enhances FtsZ-ring assembly. Directly interacts with FtsZ and promotes bundling of FtsZ protofilaments, with a reduction in FtsZ GTPase activity.</text>
</comment>
<comment type="subunit">
    <text evidence="1">Interacts with FtsZ.</text>
</comment>
<comment type="subcellular location">
    <subcellularLocation>
        <location evidence="1">Cytoplasm</location>
    </subcellularLocation>
    <text evidence="1">Localizes to mid-cell in an FtsZ-dependent manner.</text>
</comment>
<comment type="similarity">
    <text evidence="1">Belongs to the ZapD family.</text>
</comment>
<accession>P67691</accession>
<accession>Q7VSV6</accession>
<accession>Q7W3R9</accession>
<accession>Q7WF47</accession>
<reference key="1">
    <citation type="journal article" date="2003" name="Nat. Genet.">
        <title>Comparative analysis of the genome sequences of Bordetella pertussis, Bordetella parapertussis and Bordetella bronchiseptica.</title>
        <authorList>
            <person name="Parkhill J."/>
            <person name="Sebaihia M."/>
            <person name="Preston A."/>
            <person name="Murphy L.D."/>
            <person name="Thomson N.R."/>
            <person name="Harris D.E."/>
            <person name="Holden M.T.G."/>
            <person name="Churcher C.M."/>
            <person name="Bentley S.D."/>
            <person name="Mungall K.L."/>
            <person name="Cerdeno-Tarraga A.-M."/>
            <person name="Temple L."/>
            <person name="James K.D."/>
            <person name="Harris B."/>
            <person name="Quail M.A."/>
            <person name="Achtman M."/>
            <person name="Atkin R."/>
            <person name="Baker S."/>
            <person name="Basham D."/>
            <person name="Bason N."/>
            <person name="Cherevach I."/>
            <person name="Chillingworth T."/>
            <person name="Collins M."/>
            <person name="Cronin A."/>
            <person name="Davis P."/>
            <person name="Doggett J."/>
            <person name="Feltwell T."/>
            <person name="Goble A."/>
            <person name="Hamlin N."/>
            <person name="Hauser H."/>
            <person name="Holroyd S."/>
            <person name="Jagels K."/>
            <person name="Leather S."/>
            <person name="Moule S."/>
            <person name="Norberczak H."/>
            <person name="O'Neil S."/>
            <person name="Ormond D."/>
            <person name="Price C."/>
            <person name="Rabbinowitsch E."/>
            <person name="Rutter S."/>
            <person name="Sanders M."/>
            <person name="Saunders D."/>
            <person name="Seeger K."/>
            <person name="Sharp S."/>
            <person name="Simmonds M."/>
            <person name="Skelton J."/>
            <person name="Squares R."/>
            <person name="Squares S."/>
            <person name="Stevens K."/>
            <person name="Unwin L."/>
            <person name="Whitehead S."/>
            <person name="Barrell B.G."/>
            <person name="Maskell D.J."/>
        </authorList>
    </citation>
    <scope>NUCLEOTIDE SEQUENCE [LARGE SCALE GENOMIC DNA]</scope>
    <source>
        <strain>ATCC BAA-588 / NCTC 13252 / RB50</strain>
    </source>
</reference>
<organism>
    <name type="scientific">Bordetella bronchiseptica (strain ATCC BAA-588 / NCTC 13252 / RB50)</name>
    <name type="common">Alcaligenes bronchisepticus</name>
    <dbReference type="NCBI Taxonomy" id="257310"/>
    <lineage>
        <taxon>Bacteria</taxon>
        <taxon>Pseudomonadati</taxon>
        <taxon>Pseudomonadota</taxon>
        <taxon>Betaproteobacteria</taxon>
        <taxon>Burkholderiales</taxon>
        <taxon>Alcaligenaceae</taxon>
        <taxon>Bordetella</taxon>
    </lineage>
</organism>